<name>DNAJ_ALCBS</name>
<dbReference type="EMBL" id="AM286690">
    <property type="protein sequence ID" value="CAL15763.1"/>
    <property type="molecule type" value="Genomic_DNA"/>
</dbReference>
<dbReference type="RefSeq" id="WP_011587611.1">
    <property type="nucleotide sequence ID" value="NC_008260.1"/>
</dbReference>
<dbReference type="SMR" id="Q0VST5"/>
<dbReference type="STRING" id="393595.ABO_0315"/>
<dbReference type="KEGG" id="abo:ABO_0315"/>
<dbReference type="eggNOG" id="COG0484">
    <property type="taxonomic scope" value="Bacteria"/>
</dbReference>
<dbReference type="HOGENOM" id="CLU_017633_0_7_6"/>
<dbReference type="OrthoDB" id="9779889at2"/>
<dbReference type="Proteomes" id="UP000008871">
    <property type="component" value="Chromosome"/>
</dbReference>
<dbReference type="GO" id="GO:0005737">
    <property type="term" value="C:cytoplasm"/>
    <property type="evidence" value="ECO:0007669"/>
    <property type="project" value="UniProtKB-SubCell"/>
</dbReference>
<dbReference type="GO" id="GO:0005524">
    <property type="term" value="F:ATP binding"/>
    <property type="evidence" value="ECO:0007669"/>
    <property type="project" value="InterPro"/>
</dbReference>
<dbReference type="GO" id="GO:0031072">
    <property type="term" value="F:heat shock protein binding"/>
    <property type="evidence" value="ECO:0007669"/>
    <property type="project" value="InterPro"/>
</dbReference>
<dbReference type="GO" id="GO:0051082">
    <property type="term" value="F:unfolded protein binding"/>
    <property type="evidence" value="ECO:0007669"/>
    <property type="project" value="UniProtKB-UniRule"/>
</dbReference>
<dbReference type="GO" id="GO:0008270">
    <property type="term" value="F:zinc ion binding"/>
    <property type="evidence" value="ECO:0007669"/>
    <property type="project" value="UniProtKB-UniRule"/>
</dbReference>
<dbReference type="GO" id="GO:0051085">
    <property type="term" value="P:chaperone cofactor-dependent protein refolding"/>
    <property type="evidence" value="ECO:0007669"/>
    <property type="project" value="TreeGrafter"/>
</dbReference>
<dbReference type="GO" id="GO:0006260">
    <property type="term" value="P:DNA replication"/>
    <property type="evidence" value="ECO:0007669"/>
    <property type="project" value="UniProtKB-KW"/>
</dbReference>
<dbReference type="GO" id="GO:0042026">
    <property type="term" value="P:protein refolding"/>
    <property type="evidence" value="ECO:0007669"/>
    <property type="project" value="TreeGrafter"/>
</dbReference>
<dbReference type="GO" id="GO:0009408">
    <property type="term" value="P:response to heat"/>
    <property type="evidence" value="ECO:0007669"/>
    <property type="project" value="InterPro"/>
</dbReference>
<dbReference type="CDD" id="cd06257">
    <property type="entry name" value="DnaJ"/>
    <property type="match status" value="1"/>
</dbReference>
<dbReference type="CDD" id="cd10747">
    <property type="entry name" value="DnaJ_C"/>
    <property type="match status" value="1"/>
</dbReference>
<dbReference type="CDD" id="cd10719">
    <property type="entry name" value="DnaJ_zf"/>
    <property type="match status" value="1"/>
</dbReference>
<dbReference type="FunFam" id="1.10.287.110:FF:000034">
    <property type="entry name" value="Chaperone protein DnaJ"/>
    <property type="match status" value="1"/>
</dbReference>
<dbReference type="FunFam" id="2.10.230.10:FF:000002">
    <property type="entry name" value="Molecular chaperone DnaJ"/>
    <property type="match status" value="1"/>
</dbReference>
<dbReference type="FunFam" id="2.60.260.20:FF:000004">
    <property type="entry name" value="Molecular chaperone DnaJ"/>
    <property type="match status" value="1"/>
</dbReference>
<dbReference type="Gene3D" id="1.10.287.110">
    <property type="entry name" value="DnaJ domain"/>
    <property type="match status" value="1"/>
</dbReference>
<dbReference type="Gene3D" id="2.10.230.10">
    <property type="entry name" value="Heat shock protein DnaJ, cysteine-rich domain"/>
    <property type="match status" value="1"/>
</dbReference>
<dbReference type="Gene3D" id="2.60.260.20">
    <property type="entry name" value="Urease metallochaperone UreE, N-terminal domain"/>
    <property type="match status" value="2"/>
</dbReference>
<dbReference type="HAMAP" id="MF_01152">
    <property type="entry name" value="DnaJ"/>
    <property type="match status" value="1"/>
</dbReference>
<dbReference type="InterPro" id="IPR012724">
    <property type="entry name" value="DnaJ"/>
</dbReference>
<dbReference type="InterPro" id="IPR002939">
    <property type="entry name" value="DnaJ_C"/>
</dbReference>
<dbReference type="InterPro" id="IPR001623">
    <property type="entry name" value="DnaJ_domain"/>
</dbReference>
<dbReference type="InterPro" id="IPR018253">
    <property type="entry name" value="DnaJ_domain_CS"/>
</dbReference>
<dbReference type="InterPro" id="IPR008971">
    <property type="entry name" value="HSP40/DnaJ_pept-bd"/>
</dbReference>
<dbReference type="InterPro" id="IPR001305">
    <property type="entry name" value="HSP_DnaJ_Cys-rich_dom"/>
</dbReference>
<dbReference type="InterPro" id="IPR036410">
    <property type="entry name" value="HSP_DnaJ_Cys-rich_dom_sf"/>
</dbReference>
<dbReference type="InterPro" id="IPR036869">
    <property type="entry name" value="J_dom_sf"/>
</dbReference>
<dbReference type="NCBIfam" id="TIGR02349">
    <property type="entry name" value="DnaJ_bact"/>
    <property type="match status" value="1"/>
</dbReference>
<dbReference type="NCBIfam" id="NF008035">
    <property type="entry name" value="PRK10767.1"/>
    <property type="match status" value="1"/>
</dbReference>
<dbReference type="PANTHER" id="PTHR43096:SF48">
    <property type="entry name" value="CHAPERONE PROTEIN DNAJ"/>
    <property type="match status" value="1"/>
</dbReference>
<dbReference type="PANTHER" id="PTHR43096">
    <property type="entry name" value="DNAJ HOMOLOG 1, MITOCHONDRIAL-RELATED"/>
    <property type="match status" value="1"/>
</dbReference>
<dbReference type="Pfam" id="PF00226">
    <property type="entry name" value="DnaJ"/>
    <property type="match status" value="1"/>
</dbReference>
<dbReference type="Pfam" id="PF01556">
    <property type="entry name" value="DnaJ_C"/>
    <property type="match status" value="1"/>
</dbReference>
<dbReference type="Pfam" id="PF00684">
    <property type="entry name" value="DnaJ_CXXCXGXG"/>
    <property type="match status" value="1"/>
</dbReference>
<dbReference type="PRINTS" id="PR00625">
    <property type="entry name" value="JDOMAIN"/>
</dbReference>
<dbReference type="SMART" id="SM00271">
    <property type="entry name" value="DnaJ"/>
    <property type="match status" value="1"/>
</dbReference>
<dbReference type="SUPFAM" id="SSF46565">
    <property type="entry name" value="Chaperone J-domain"/>
    <property type="match status" value="1"/>
</dbReference>
<dbReference type="SUPFAM" id="SSF57938">
    <property type="entry name" value="DnaJ/Hsp40 cysteine-rich domain"/>
    <property type="match status" value="1"/>
</dbReference>
<dbReference type="SUPFAM" id="SSF49493">
    <property type="entry name" value="HSP40/DnaJ peptide-binding domain"/>
    <property type="match status" value="2"/>
</dbReference>
<dbReference type="PROSITE" id="PS00636">
    <property type="entry name" value="DNAJ_1"/>
    <property type="match status" value="1"/>
</dbReference>
<dbReference type="PROSITE" id="PS50076">
    <property type="entry name" value="DNAJ_2"/>
    <property type="match status" value="1"/>
</dbReference>
<dbReference type="PROSITE" id="PS51188">
    <property type="entry name" value="ZF_CR"/>
    <property type="match status" value="1"/>
</dbReference>
<proteinExistence type="inferred from homology"/>
<gene>
    <name evidence="1" type="primary">dnaJ</name>
    <name type="ordered locus">ABO_0315</name>
</gene>
<protein>
    <recommendedName>
        <fullName evidence="1">Chaperone protein DnaJ</fullName>
    </recommendedName>
</protein>
<feature type="chain" id="PRO_1000085138" description="Chaperone protein DnaJ">
    <location>
        <begin position="1"/>
        <end position="376"/>
    </location>
</feature>
<feature type="domain" description="J" evidence="1">
    <location>
        <begin position="5"/>
        <end position="70"/>
    </location>
</feature>
<feature type="repeat" description="CXXCXGXG motif">
    <location>
        <begin position="147"/>
        <end position="154"/>
    </location>
</feature>
<feature type="repeat" description="CXXCXGXG motif">
    <location>
        <begin position="164"/>
        <end position="171"/>
    </location>
</feature>
<feature type="repeat" description="CXXCXGXG motif">
    <location>
        <begin position="186"/>
        <end position="193"/>
    </location>
</feature>
<feature type="repeat" description="CXXCXGXG motif">
    <location>
        <begin position="200"/>
        <end position="207"/>
    </location>
</feature>
<feature type="zinc finger region" description="CR-type" evidence="1">
    <location>
        <begin position="134"/>
        <end position="212"/>
    </location>
</feature>
<feature type="binding site" evidence="1">
    <location>
        <position position="147"/>
    </location>
    <ligand>
        <name>Zn(2+)</name>
        <dbReference type="ChEBI" id="CHEBI:29105"/>
        <label>1</label>
    </ligand>
</feature>
<feature type="binding site" evidence="1">
    <location>
        <position position="150"/>
    </location>
    <ligand>
        <name>Zn(2+)</name>
        <dbReference type="ChEBI" id="CHEBI:29105"/>
        <label>1</label>
    </ligand>
</feature>
<feature type="binding site" evidence="1">
    <location>
        <position position="164"/>
    </location>
    <ligand>
        <name>Zn(2+)</name>
        <dbReference type="ChEBI" id="CHEBI:29105"/>
        <label>2</label>
    </ligand>
</feature>
<feature type="binding site" evidence="1">
    <location>
        <position position="167"/>
    </location>
    <ligand>
        <name>Zn(2+)</name>
        <dbReference type="ChEBI" id="CHEBI:29105"/>
        <label>2</label>
    </ligand>
</feature>
<feature type="binding site" evidence="1">
    <location>
        <position position="186"/>
    </location>
    <ligand>
        <name>Zn(2+)</name>
        <dbReference type="ChEBI" id="CHEBI:29105"/>
        <label>2</label>
    </ligand>
</feature>
<feature type="binding site" evidence="1">
    <location>
        <position position="189"/>
    </location>
    <ligand>
        <name>Zn(2+)</name>
        <dbReference type="ChEBI" id="CHEBI:29105"/>
        <label>2</label>
    </ligand>
</feature>
<feature type="binding site" evidence="1">
    <location>
        <position position="200"/>
    </location>
    <ligand>
        <name>Zn(2+)</name>
        <dbReference type="ChEBI" id="CHEBI:29105"/>
        <label>1</label>
    </ligand>
</feature>
<feature type="binding site" evidence="1">
    <location>
        <position position="203"/>
    </location>
    <ligand>
        <name>Zn(2+)</name>
        <dbReference type="ChEBI" id="CHEBI:29105"/>
        <label>1</label>
    </ligand>
</feature>
<sequence>MSKRDYYEVLGAAKDASAQDLKKAYRRLAMKYHPDRNPDDKEALAKFKEAKEAYEVLADEQKRAAYDQFGHAGVNGQGGGPGAGAGAGGFGDIFGDIFGDIFGGAGGGGGRRGPSRGADLRYTLELSLEQAVRGCDEKIRIPTWDSCDVCHGSGAKEGSQPVTCTTCGGVGQVRMQQGFFTVQQACPTCKGEGKIIKDPCGNCGGQGRVQNTKTLSVKIPAGVDTGDRIRLAGEGEAGVHGAPSGDLYVQVAVREHDIFQRDGDNLYCEVPISFVDATLGGELDVPTLNGKVKLKVPAETQSGKLFRLRGKGVAPVRGGAPGDLLCKVVIETPVKLSSEQKELLRKFQESLESGGNRHNPRKNNWFEGVKRFFDTK</sequence>
<keyword id="KW-0143">Chaperone</keyword>
<keyword id="KW-0963">Cytoplasm</keyword>
<keyword id="KW-0235">DNA replication</keyword>
<keyword id="KW-0479">Metal-binding</keyword>
<keyword id="KW-1185">Reference proteome</keyword>
<keyword id="KW-0677">Repeat</keyword>
<keyword id="KW-0346">Stress response</keyword>
<keyword id="KW-0862">Zinc</keyword>
<keyword id="KW-0863">Zinc-finger</keyword>
<evidence type="ECO:0000255" key="1">
    <source>
        <dbReference type="HAMAP-Rule" id="MF_01152"/>
    </source>
</evidence>
<accession>Q0VST5</accession>
<comment type="function">
    <text evidence="1">Participates actively in the response to hyperosmotic and heat shock by preventing the aggregation of stress-denatured proteins and by disaggregating proteins, also in an autonomous, DnaK-independent fashion. Unfolded proteins bind initially to DnaJ; upon interaction with the DnaJ-bound protein, DnaK hydrolyzes its bound ATP, resulting in the formation of a stable complex. GrpE releases ADP from DnaK; ATP binding to DnaK triggers the release of the substrate protein, thus completing the reaction cycle. Several rounds of ATP-dependent interactions between DnaJ, DnaK and GrpE are required for fully efficient folding. Also involved, together with DnaK and GrpE, in the DNA replication of plasmids through activation of initiation proteins.</text>
</comment>
<comment type="cofactor">
    <cofactor evidence="1">
        <name>Zn(2+)</name>
        <dbReference type="ChEBI" id="CHEBI:29105"/>
    </cofactor>
    <text evidence="1">Binds 2 Zn(2+) ions per monomer.</text>
</comment>
<comment type="subunit">
    <text evidence="1">Homodimer.</text>
</comment>
<comment type="subcellular location">
    <subcellularLocation>
        <location evidence="1">Cytoplasm</location>
    </subcellularLocation>
</comment>
<comment type="domain">
    <text evidence="1">The J domain is necessary and sufficient to stimulate DnaK ATPase activity. Zinc center 1 plays an important role in the autonomous, DnaK-independent chaperone activity of DnaJ. Zinc center 2 is essential for interaction with DnaK and for DnaJ activity.</text>
</comment>
<comment type="similarity">
    <text evidence="1">Belongs to the DnaJ family.</text>
</comment>
<reference key="1">
    <citation type="journal article" date="2006" name="Nat. Biotechnol.">
        <title>Genome sequence of the ubiquitous hydrocarbon-degrading marine bacterium Alcanivorax borkumensis.</title>
        <authorList>
            <person name="Schneiker S."/>
            <person name="Martins dos Santos V.A.P."/>
            <person name="Bartels D."/>
            <person name="Bekel T."/>
            <person name="Brecht M."/>
            <person name="Buhrmester J."/>
            <person name="Chernikova T.N."/>
            <person name="Denaro R."/>
            <person name="Ferrer M."/>
            <person name="Gertler C."/>
            <person name="Goesmann A."/>
            <person name="Golyshina O.V."/>
            <person name="Kaminski F."/>
            <person name="Khachane A.N."/>
            <person name="Lang S."/>
            <person name="Linke B."/>
            <person name="McHardy A.C."/>
            <person name="Meyer F."/>
            <person name="Nechitaylo T."/>
            <person name="Puehler A."/>
            <person name="Regenhardt D."/>
            <person name="Rupp O."/>
            <person name="Sabirova J.S."/>
            <person name="Selbitschka W."/>
            <person name="Yakimov M.M."/>
            <person name="Timmis K.N."/>
            <person name="Vorhoelter F.-J."/>
            <person name="Weidner S."/>
            <person name="Kaiser O."/>
            <person name="Golyshin P.N."/>
        </authorList>
    </citation>
    <scope>NUCLEOTIDE SEQUENCE [LARGE SCALE GENOMIC DNA]</scope>
    <source>
        <strain>ATCC 700651 / DSM 11573 / NCIMB 13689 / SK2</strain>
    </source>
</reference>
<organism>
    <name type="scientific">Alcanivorax borkumensis (strain ATCC 700651 / DSM 11573 / NCIMB 13689 / SK2)</name>
    <dbReference type="NCBI Taxonomy" id="393595"/>
    <lineage>
        <taxon>Bacteria</taxon>
        <taxon>Pseudomonadati</taxon>
        <taxon>Pseudomonadota</taxon>
        <taxon>Gammaproteobacteria</taxon>
        <taxon>Oceanospirillales</taxon>
        <taxon>Alcanivoracaceae</taxon>
        <taxon>Alcanivorax</taxon>
    </lineage>
</organism>